<feature type="chain" id="PRO_1000140758" description="Small ribosomal subunit protein uS4">
    <location>
        <begin position="1"/>
        <end position="205"/>
    </location>
</feature>
<feature type="domain" description="S4 RNA-binding" evidence="1">
    <location>
        <begin position="94"/>
        <end position="155"/>
    </location>
</feature>
<feature type="region of interest" description="Disordered" evidence="2">
    <location>
        <begin position="1"/>
        <end position="49"/>
    </location>
</feature>
<feature type="compositionally biased region" description="Basic residues" evidence="2">
    <location>
        <begin position="1"/>
        <end position="12"/>
    </location>
</feature>
<comment type="function">
    <text evidence="1">One of the primary rRNA binding proteins, it binds directly to 16S rRNA where it nucleates assembly of the body of the 30S subunit.</text>
</comment>
<comment type="function">
    <text evidence="1">With S5 and S12 plays an important role in translational accuracy.</text>
</comment>
<comment type="subunit">
    <text evidence="1">Part of the 30S ribosomal subunit. Contacts protein S5. The interaction surface between S4 and S5 is involved in control of translational fidelity.</text>
</comment>
<comment type="similarity">
    <text evidence="1">Belongs to the universal ribosomal protein uS4 family.</text>
</comment>
<reference key="1">
    <citation type="submission" date="2008-04" db="EMBL/GenBank/DDBJ databases">
        <title>Complete sequence of chromosome of Methylobacterium populi BJ001.</title>
        <authorList>
            <consortium name="US DOE Joint Genome Institute"/>
            <person name="Copeland A."/>
            <person name="Lucas S."/>
            <person name="Lapidus A."/>
            <person name="Glavina del Rio T."/>
            <person name="Dalin E."/>
            <person name="Tice H."/>
            <person name="Bruce D."/>
            <person name="Goodwin L."/>
            <person name="Pitluck S."/>
            <person name="Chertkov O."/>
            <person name="Brettin T."/>
            <person name="Detter J.C."/>
            <person name="Han C."/>
            <person name="Kuske C.R."/>
            <person name="Schmutz J."/>
            <person name="Larimer F."/>
            <person name="Land M."/>
            <person name="Hauser L."/>
            <person name="Kyrpides N."/>
            <person name="Mikhailova N."/>
            <person name="Marx C."/>
            <person name="Richardson P."/>
        </authorList>
    </citation>
    <scope>NUCLEOTIDE SEQUENCE [LARGE SCALE GENOMIC DNA]</scope>
    <source>
        <strain>ATCC BAA-705 / NCIMB 13946 / BJ001</strain>
    </source>
</reference>
<dbReference type="EMBL" id="CP001029">
    <property type="protein sequence ID" value="ACB83371.1"/>
    <property type="molecule type" value="Genomic_DNA"/>
</dbReference>
<dbReference type="RefSeq" id="WP_012456967.1">
    <property type="nucleotide sequence ID" value="NC_010725.1"/>
</dbReference>
<dbReference type="SMR" id="B1ZAP8"/>
<dbReference type="STRING" id="441620.Mpop_5277"/>
<dbReference type="KEGG" id="mpo:Mpop_5277"/>
<dbReference type="eggNOG" id="COG0522">
    <property type="taxonomic scope" value="Bacteria"/>
</dbReference>
<dbReference type="HOGENOM" id="CLU_092403_0_0_5"/>
<dbReference type="OrthoDB" id="9803672at2"/>
<dbReference type="Proteomes" id="UP000007136">
    <property type="component" value="Chromosome"/>
</dbReference>
<dbReference type="GO" id="GO:0015935">
    <property type="term" value="C:small ribosomal subunit"/>
    <property type="evidence" value="ECO:0007669"/>
    <property type="project" value="InterPro"/>
</dbReference>
<dbReference type="GO" id="GO:0019843">
    <property type="term" value="F:rRNA binding"/>
    <property type="evidence" value="ECO:0007669"/>
    <property type="project" value="UniProtKB-UniRule"/>
</dbReference>
<dbReference type="GO" id="GO:0003735">
    <property type="term" value="F:structural constituent of ribosome"/>
    <property type="evidence" value="ECO:0007669"/>
    <property type="project" value="InterPro"/>
</dbReference>
<dbReference type="GO" id="GO:0042274">
    <property type="term" value="P:ribosomal small subunit biogenesis"/>
    <property type="evidence" value="ECO:0007669"/>
    <property type="project" value="TreeGrafter"/>
</dbReference>
<dbReference type="GO" id="GO:0006412">
    <property type="term" value="P:translation"/>
    <property type="evidence" value="ECO:0007669"/>
    <property type="project" value="UniProtKB-UniRule"/>
</dbReference>
<dbReference type="CDD" id="cd00165">
    <property type="entry name" value="S4"/>
    <property type="match status" value="1"/>
</dbReference>
<dbReference type="FunFam" id="3.10.290.10:FF:000001">
    <property type="entry name" value="30S ribosomal protein S4"/>
    <property type="match status" value="1"/>
</dbReference>
<dbReference type="Gene3D" id="1.10.1050.10">
    <property type="entry name" value="Ribosomal Protein S4 Delta 41, Chain A, domain 1"/>
    <property type="match status" value="1"/>
</dbReference>
<dbReference type="Gene3D" id="3.10.290.10">
    <property type="entry name" value="RNA-binding S4 domain"/>
    <property type="match status" value="1"/>
</dbReference>
<dbReference type="HAMAP" id="MF_01306_B">
    <property type="entry name" value="Ribosomal_uS4_B"/>
    <property type="match status" value="1"/>
</dbReference>
<dbReference type="InterPro" id="IPR022801">
    <property type="entry name" value="Ribosomal_uS4"/>
</dbReference>
<dbReference type="InterPro" id="IPR005709">
    <property type="entry name" value="Ribosomal_uS4_bac-type"/>
</dbReference>
<dbReference type="InterPro" id="IPR018079">
    <property type="entry name" value="Ribosomal_uS4_CS"/>
</dbReference>
<dbReference type="InterPro" id="IPR001912">
    <property type="entry name" value="Ribosomal_uS4_N"/>
</dbReference>
<dbReference type="InterPro" id="IPR002942">
    <property type="entry name" value="S4_RNA-bd"/>
</dbReference>
<dbReference type="InterPro" id="IPR036986">
    <property type="entry name" value="S4_RNA-bd_sf"/>
</dbReference>
<dbReference type="NCBIfam" id="NF003717">
    <property type="entry name" value="PRK05327.1"/>
    <property type="match status" value="1"/>
</dbReference>
<dbReference type="NCBIfam" id="TIGR01017">
    <property type="entry name" value="rpsD_bact"/>
    <property type="match status" value="1"/>
</dbReference>
<dbReference type="PANTHER" id="PTHR11831">
    <property type="entry name" value="30S 40S RIBOSOMAL PROTEIN"/>
    <property type="match status" value="1"/>
</dbReference>
<dbReference type="PANTHER" id="PTHR11831:SF4">
    <property type="entry name" value="SMALL RIBOSOMAL SUBUNIT PROTEIN US4M"/>
    <property type="match status" value="1"/>
</dbReference>
<dbReference type="Pfam" id="PF00163">
    <property type="entry name" value="Ribosomal_S4"/>
    <property type="match status" value="1"/>
</dbReference>
<dbReference type="Pfam" id="PF01479">
    <property type="entry name" value="S4"/>
    <property type="match status" value="1"/>
</dbReference>
<dbReference type="SMART" id="SM01390">
    <property type="entry name" value="Ribosomal_S4"/>
    <property type="match status" value="1"/>
</dbReference>
<dbReference type="SMART" id="SM00363">
    <property type="entry name" value="S4"/>
    <property type="match status" value="1"/>
</dbReference>
<dbReference type="SUPFAM" id="SSF55174">
    <property type="entry name" value="Alpha-L RNA-binding motif"/>
    <property type="match status" value="1"/>
</dbReference>
<dbReference type="PROSITE" id="PS00632">
    <property type="entry name" value="RIBOSOMAL_S4"/>
    <property type="match status" value="1"/>
</dbReference>
<dbReference type="PROSITE" id="PS50889">
    <property type="entry name" value="S4"/>
    <property type="match status" value="1"/>
</dbReference>
<proteinExistence type="inferred from homology"/>
<sequence>MSKRVQAKHKLDRRMGQNIWGRPKSPVNRREYGPGQHGQRRKGKMSDFGTQLRAKQKLKGYYGNITEKQFRRYYAEAIRLRGDSGENLIGLLERRLDAVVYRSKFVATPFAARQFVNHGHIKVNGRRVNIPSYQVKAGDVIEVKEASRQLEIVVVASQLAERDVPDYIEVDHQKMSARVTRIPGLSEVPYPVQMEPNLVIEFYSR</sequence>
<protein>
    <recommendedName>
        <fullName evidence="1">Small ribosomal subunit protein uS4</fullName>
    </recommendedName>
    <alternativeName>
        <fullName evidence="3">30S ribosomal protein S4</fullName>
    </alternativeName>
</protein>
<keyword id="KW-0687">Ribonucleoprotein</keyword>
<keyword id="KW-0689">Ribosomal protein</keyword>
<keyword id="KW-0694">RNA-binding</keyword>
<keyword id="KW-0699">rRNA-binding</keyword>
<gene>
    <name evidence="1" type="primary">rpsD</name>
    <name type="ordered locus">Mpop_5277</name>
</gene>
<accession>B1ZAP8</accession>
<evidence type="ECO:0000255" key="1">
    <source>
        <dbReference type="HAMAP-Rule" id="MF_01306"/>
    </source>
</evidence>
<evidence type="ECO:0000256" key="2">
    <source>
        <dbReference type="SAM" id="MobiDB-lite"/>
    </source>
</evidence>
<evidence type="ECO:0000305" key="3"/>
<name>RS4_METPB</name>
<organism>
    <name type="scientific">Methylorubrum populi (strain ATCC BAA-705 / NCIMB 13946 / BJ001)</name>
    <name type="common">Methylobacterium populi</name>
    <dbReference type="NCBI Taxonomy" id="441620"/>
    <lineage>
        <taxon>Bacteria</taxon>
        <taxon>Pseudomonadati</taxon>
        <taxon>Pseudomonadota</taxon>
        <taxon>Alphaproteobacteria</taxon>
        <taxon>Hyphomicrobiales</taxon>
        <taxon>Methylobacteriaceae</taxon>
        <taxon>Methylorubrum</taxon>
    </lineage>
</organism>